<accession>A9R8K0</accession>
<evidence type="ECO:0000255" key="1">
    <source>
        <dbReference type="HAMAP-Rule" id="MF_00260"/>
    </source>
</evidence>
<reference key="1">
    <citation type="journal article" date="2010" name="J. Bacteriol.">
        <title>Genome sequence of the deep-rooted Yersinia pestis strain Angola reveals new insights into the evolution and pangenome of the plague bacterium.</title>
        <authorList>
            <person name="Eppinger M."/>
            <person name="Worsham P.L."/>
            <person name="Nikolich M.P."/>
            <person name="Riley D.R."/>
            <person name="Sebastian Y."/>
            <person name="Mou S."/>
            <person name="Achtman M."/>
            <person name="Lindler L.E."/>
            <person name="Ravel J."/>
        </authorList>
    </citation>
    <scope>NUCLEOTIDE SEQUENCE [LARGE SCALE GENOMIC DNA]</scope>
    <source>
        <strain>Angola</strain>
    </source>
</reference>
<sequence>MLDKIIRIATRQSPLALWQAHYVQHLLQANHPGLQIELVPMVTRGDIILDTPLAKVGGKGLFVKELELALLDGRADIAVHSMKDVPIAFPEGLGLVTICEREDPRDAFVSSHYAHLDDLPAGSVVGTSSLRRQCQLRERRPDLIIRDLRGNVGTRLAKLDNGDYQAIILAVAGLKRLGLENRIRYAMSAEESLPAVGQGAVGIECRLDDDHTRQLLAPLNHRHTELRVCAERAMNIRLEGGCQVPIGSYAELEGDTLWLRALVGAPDGSQMIRGERRGPAAEAEQMGIELADELLSLGAREILAAVYLDNPAR</sequence>
<gene>
    <name evidence="1" type="primary">hemC</name>
    <name type="ordered locus">YpAngola_A0536</name>
</gene>
<name>HEM3_YERPG</name>
<comment type="function">
    <text evidence="1">Tetrapolymerization of the monopyrrole PBG into the hydroxymethylbilane pre-uroporphyrinogen in several discrete steps.</text>
</comment>
<comment type="catalytic activity">
    <reaction evidence="1">
        <text>4 porphobilinogen + H2O = hydroxymethylbilane + 4 NH4(+)</text>
        <dbReference type="Rhea" id="RHEA:13185"/>
        <dbReference type="ChEBI" id="CHEBI:15377"/>
        <dbReference type="ChEBI" id="CHEBI:28938"/>
        <dbReference type="ChEBI" id="CHEBI:57845"/>
        <dbReference type="ChEBI" id="CHEBI:58126"/>
        <dbReference type="EC" id="2.5.1.61"/>
    </reaction>
</comment>
<comment type="cofactor">
    <cofactor evidence="1">
        <name>dipyrromethane</name>
        <dbReference type="ChEBI" id="CHEBI:60342"/>
    </cofactor>
    <text evidence="1">Binds 1 dipyrromethane group covalently.</text>
</comment>
<comment type="pathway">
    <text evidence="1">Porphyrin-containing compound metabolism; protoporphyrin-IX biosynthesis; coproporphyrinogen-III from 5-aminolevulinate: step 2/4.</text>
</comment>
<comment type="subunit">
    <text evidence="1">Monomer.</text>
</comment>
<comment type="miscellaneous">
    <text evidence="1">The porphobilinogen subunits are added to the dipyrromethane group.</text>
</comment>
<comment type="similarity">
    <text evidence="1">Belongs to the HMBS family.</text>
</comment>
<feature type="chain" id="PRO_1000114189" description="Porphobilinogen deaminase">
    <location>
        <begin position="1"/>
        <end position="313"/>
    </location>
</feature>
<feature type="modified residue" description="S-(dipyrrolylmethanemethyl)cysteine" evidence="1">
    <location>
        <position position="242"/>
    </location>
</feature>
<organism>
    <name type="scientific">Yersinia pestis bv. Antiqua (strain Angola)</name>
    <dbReference type="NCBI Taxonomy" id="349746"/>
    <lineage>
        <taxon>Bacteria</taxon>
        <taxon>Pseudomonadati</taxon>
        <taxon>Pseudomonadota</taxon>
        <taxon>Gammaproteobacteria</taxon>
        <taxon>Enterobacterales</taxon>
        <taxon>Yersiniaceae</taxon>
        <taxon>Yersinia</taxon>
    </lineage>
</organism>
<keyword id="KW-0627">Porphyrin biosynthesis</keyword>
<keyword id="KW-0808">Transferase</keyword>
<proteinExistence type="inferred from homology"/>
<protein>
    <recommendedName>
        <fullName evidence="1">Porphobilinogen deaminase</fullName>
        <shortName evidence="1">PBG</shortName>
        <ecNumber evidence="1">2.5.1.61</ecNumber>
    </recommendedName>
    <alternativeName>
        <fullName evidence="1">Hydroxymethylbilane synthase</fullName>
        <shortName evidence="1">HMBS</shortName>
    </alternativeName>
    <alternativeName>
        <fullName evidence="1">Pre-uroporphyrinogen synthase</fullName>
    </alternativeName>
</protein>
<dbReference type="EC" id="2.5.1.61" evidence="1"/>
<dbReference type="EMBL" id="CP000901">
    <property type="protein sequence ID" value="ABX86127.1"/>
    <property type="molecule type" value="Genomic_DNA"/>
</dbReference>
<dbReference type="RefSeq" id="WP_012229069.1">
    <property type="nucleotide sequence ID" value="NC_010159.1"/>
</dbReference>
<dbReference type="SMR" id="A9R8K0"/>
<dbReference type="KEGG" id="ypg:YpAngola_A0536"/>
<dbReference type="PATRIC" id="fig|349746.12.peg.1482"/>
<dbReference type="UniPathway" id="UPA00251">
    <property type="reaction ID" value="UER00319"/>
</dbReference>
<dbReference type="GO" id="GO:0005737">
    <property type="term" value="C:cytoplasm"/>
    <property type="evidence" value="ECO:0007669"/>
    <property type="project" value="TreeGrafter"/>
</dbReference>
<dbReference type="GO" id="GO:0004418">
    <property type="term" value="F:hydroxymethylbilane synthase activity"/>
    <property type="evidence" value="ECO:0007669"/>
    <property type="project" value="UniProtKB-UniRule"/>
</dbReference>
<dbReference type="GO" id="GO:0006782">
    <property type="term" value="P:protoporphyrinogen IX biosynthetic process"/>
    <property type="evidence" value="ECO:0007669"/>
    <property type="project" value="UniProtKB-UniRule"/>
</dbReference>
<dbReference type="CDD" id="cd13646">
    <property type="entry name" value="PBP2_EcHMBS_like"/>
    <property type="match status" value="1"/>
</dbReference>
<dbReference type="FunFam" id="3.30.160.40:FF:000002">
    <property type="entry name" value="Porphobilinogen deaminase"/>
    <property type="match status" value="1"/>
</dbReference>
<dbReference type="FunFam" id="3.40.190.10:FF:000004">
    <property type="entry name" value="Porphobilinogen deaminase"/>
    <property type="match status" value="1"/>
</dbReference>
<dbReference type="FunFam" id="3.40.190.10:FF:000005">
    <property type="entry name" value="Porphobilinogen deaminase"/>
    <property type="match status" value="1"/>
</dbReference>
<dbReference type="Gene3D" id="3.40.190.10">
    <property type="entry name" value="Periplasmic binding protein-like II"/>
    <property type="match status" value="2"/>
</dbReference>
<dbReference type="Gene3D" id="3.30.160.40">
    <property type="entry name" value="Porphobilinogen deaminase, C-terminal domain"/>
    <property type="match status" value="1"/>
</dbReference>
<dbReference type="HAMAP" id="MF_00260">
    <property type="entry name" value="Porphobil_deam"/>
    <property type="match status" value="1"/>
</dbReference>
<dbReference type="InterPro" id="IPR000860">
    <property type="entry name" value="HemC"/>
</dbReference>
<dbReference type="InterPro" id="IPR022419">
    <property type="entry name" value="Porphobilin_deaminase_cofac_BS"/>
</dbReference>
<dbReference type="InterPro" id="IPR022417">
    <property type="entry name" value="Porphobilin_deaminase_N"/>
</dbReference>
<dbReference type="InterPro" id="IPR022418">
    <property type="entry name" value="Porphobilinogen_deaminase_C"/>
</dbReference>
<dbReference type="InterPro" id="IPR036803">
    <property type="entry name" value="Porphobilinogen_deaminase_C_sf"/>
</dbReference>
<dbReference type="NCBIfam" id="TIGR00212">
    <property type="entry name" value="hemC"/>
    <property type="match status" value="1"/>
</dbReference>
<dbReference type="PANTHER" id="PTHR11557">
    <property type="entry name" value="PORPHOBILINOGEN DEAMINASE"/>
    <property type="match status" value="1"/>
</dbReference>
<dbReference type="PANTHER" id="PTHR11557:SF0">
    <property type="entry name" value="PORPHOBILINOGEN DEAMINASE"/>
    <property type="match status" value="1"/>
</dbReference>
<dbReference type="Pfam" id="PF01379">
    <property type="entry name" value="Porphobil_deam"/>
    <property type="match status" value="1"/>
</dbReference>
<dbReference type="Pfam" id="PF03900">
    <property type="entry name" value="Porphobil_deamC"/>
    <property type="match status" value="1"/>
</dbReference>
<dbReference type="PIRSF" id="PIRSF001438">
    <property type="entry name" value="4pyrrol_synth_OHMeBilane_synth"/>
    <property type="match status" value="1"/>
</dbReference>
<dbReference type="PRINTS" id="PR00151">
    <property type="entry name" value="PORPHBDMNASE"/>
</dbReference>
<dbReference type="SUPFAM" id="SSF53850">
    <property type="entry name" value="Periplasmic binding protein-like II"/>
    <property type="match status" value="1"/>
</dbReference>
<dbReference type="SUPFAM" id="SSF54782">
    <property type="entry name" value="Porphobilinogen deaminase (hydroxymethylbilane synthase), C-terminal domain"/>
    <property type="match status" value="1"/>
</dbReference>
<dbReference type="PROSITE" id="PS00533">
    <property type="entry name" value="PORPHOBILINOGEN_DEAM"/>
    <property type="match status" value="1"/>
</dbReference>